<sequence>MHWILALSLLLLLWLLVASPRLAWLKAGLLSLLLLLLSAWGLVDRLSGDGINAATLYHLRADMDGAGVSDFSGYIAVFIGMVLLSLSPLMLLRVRRFRRPRGGGAVFGAFVVMLLVSMAVSPVYRDGKRLYYQLRPVDYATVVPEYQVPQQPLQKRKNIVWIYGESLERTYFDEATFPGLMPNLRQLATEAVDVRNLTSTEGSGWTIAGMVASMCGVPLTTAPGDENSMGRMGLFLPEARCLGDYLKDQGYRNHYVGGADASFAGKGSFLASHGFDVVHDVNYFHDKGVAPKHFSAWGVHDDVLLDDAWESFQTLSRAGQPFMLTTLTMDTHHPAGHLPLACKNQRYESPLGDIGLLHAIKCSDRLIGELVTRIRNSRYGRNTIIVIASDHLAMPNDLSDVLAKQKRENLLLFLGKDIPPQQVVRRAGSTLDSGATLLQLLEPGMRTLGFGRSLLANDAPPSASVAASRDSGRDYPRYLAYARTLWTGRSTRMLRVNGNGDVVVGVQQVRPPVLLEYDDDTNLKTVYLENTSRQFDRTHSDGTLAYVDRCTAFEDGSADGDWCALVVDRNQHMKLYRDPDLTRGIAVDAPLDVTPQAPRPRVRQPIMLTQAARKTEAGRYMLELYAKRRPTRAFWVEAVSSERKVVLAQQWVVPDASGRIRMPVGLEHAVEDLGIRAWLDYTEEVSVDDLALVKDTAVADRS</sequence>
<protein>
    <recommendedName>
        <fullName evidence="1">Phosphoglycerol transferase I</fullName>
        <ecNumber evidence="1">2.7.8.20</ecNumber>
    </recommendedName>
    <alternativeName>
        <fullName evidence="1">Phosphatidylglycerol--membrane-oligosaccharide glycerophosphotransferase</fullName>
    </alternativeName>
</protein>
<gene>
    <name evidence="1" type="primary">opgB</name>
    <name type="ordered locus">xcc-b100_0434</name>
</gene>
<keyword id="KW-0997">Cell inner membrane</keyword>
<keyword id="KW-1003">Cell membrane</keyword>
<keyword id="KW-0472">Membrane</keyword>
<keyword id="KW-0808">Transferase</keyword>
<keyword id="KW-0812">Transmembrane</keyword>
<keyword id="KW-1133">Transmembrane helix</keyword>
<dbReference type="EC" id="2.7.8.20" evidence="1"/>
<dbReference type="EMBL" id="AM920689">
    <property type="protein sequence ID" value="CAP49765.1"/>
    <property type="molecule type" value="Genomic_DNA"/>
</dbReference>
<dbReference type="SMR" id="B0RMT0"/>
<dbReference type="KEGG" id="xca:xcc-b100_0434"/>
<dbReference type="HOGENOM" id="CLU_390221_0_0_6"/>
<dbReference type="UniPathway" id="UPA00637"/>
<dbReference type="Proteomes" id="UP000001188">
    <property type="component" value="Chromosome"/>
</dbReference>
<dbReference type="GO" id="GO:0005886">
    <property type="term" value="C:plasma membrane"/>
    <property type="evidence" value="ECO:0007669"/>
    <property type="project" value="UniProtKB-SubCell"/>
</dbReference>
<dbReference type="GO" id="GO:0008960">
    <property type="term" value="F:phosphatidylglycerol-membrane-oligosaccharide glycerophosphotransferase activity"/>
    <property type="evidence" value="ECO:0007669"/>
    <property type="project" value="UniProtKB-UniRule"/>
</dbReference>
<dbReference type="GO" id="GO:0009250">
    <property type="term" value="P:glucan biosynthetic process"/>
    <property type="evidence" value="ECO:0007669"/>
    <property type="project" value="UniProtKB-UniRule"/>
</dbReference>
<dbReference type="CDD" id="cd16015">
    <property type="entry name" value="LTA_synthase"/>
    <property type="match status" value="1"/>
</dbReference>
<dbReference type="Gene3D" id="3.40.720.10">
    <property type="entry name" value="Alkaline Phosphatase, subunit A"/>
    <property type="match status" value="1"/>
</dbReference>
<dbReference type="HAMAP" id="MF_01070">
    <property type="entry name" value="MdoB_OpgB"/>
    <property type="match status" value="1"/>
</dbReference>
<dbReference type="InterPro" id="IPR017850">
    <property type="entry name" value="Alkaline_phosphatase_core_sf"/>
</dbReference>
<dbReference type="InterPro" id="IPR020881">
    <property type="entry name" value="OpgB"/>
</dbReference>
<dbReference type="InterPro" id="IPR050448">
    <property type="entry name" value="OpgB/LTA_synthase_biosynth"/>
</dbReference>
<dbReference type="InterPro" id="IPR000917">
    <property type="entry name" value="Sulfatase_N"/>
</dbReference>
<dbReference type="NCBIfam" id="NF009027">
    <property type="entry name" value="PRK12363.1"/>
    <property type="match status" value="1"/>
</dbReference>
<dbReference type="PANTHER" id="PTHR47371">
    <property type="entry name" value="LIPOTEICHOIC ACID SYNTHASE"/>
    <property type="match status" value="1"/>
</dbReference>
<dbReference type="PANTHER" id="PTHR47371:SF3">
    <property type="entry name" value="PHOSPHOGLYCEROL TRANSFERASE I"/>
    <property type="match status" value="1"/>
</dbReference>
<dbReference type="Pfam" id="PF00884">
    <property type="entry name" value="Sulfatase"/>
    <property type="match status" value="1"/>
</dbReference>
<dbReference type="SUPFAM" id="SSF53649">
    <property type="entry name" value="Alkaline phosphatase-like"/>
    <property type="match status" value="1"/>
</dbReference>
<name>OPGB_XANCB</name>
<organism>
    <name type="scientific">Xanthomonas campestris pv. campestris (strain B100)</name>
    <dbReference type="NCBI Taxonomy" id="509169"/>
    <lineage>
        <taxon>Bacteria</taxon>
        <taxon>Pseudomonadati</taxon>
        <taxon>Pseudomonadota</taxon>
        <taxon>Gammaproteobacteria</taxon>
        <taxon>Lysobacterales</taxon>
        <taxon>Lysobacteraceae</taxon>
        <taxon>Xanthomonas</taxon>
    </lineage>
</organism>
<comment type="function">
    <text evidence="1">Transfers a phosphoglycerol residue from phosphatidylglycerol to the membrane-bound nascent glucan backbones.</text>
</comment>
<comment type="catalytic activity">
    <reaction evidence="1">
        <text>a phosphatidylglycerol + a membrane-derived-oligosaccharide D-glucose = a 1,2-diacyl-sn-glycerol + a membrane-derived-oligosaccharide 6-(glycerophospho)-D-glucose.</text>
        <dbReference type="EC" id="2.7.8.20"/>
    </reaction>
</comment>
<comment type="pathway">
    <text evidence="1">Glycan metabolism; osmoregulated periplasmic glucan (OPG) biosynthesis.</text>
</comment>
<comment type="subcellular location">
    <subcellularLocation>
        <location evidence="1">Cell inner membrane</location>
        <topology evidence="1">Multi-pass membrane protein</topology>
    </subcellularLocation>
</comment>
<comment type="similarity">
    <text evidence="1">Belongs to the OpgB family.</text>
</comment>
<evidence type="ECO:0000255" key="1">
    <source>
        <dbReference type="HAMAP-Rule" id="MF_01070"/>
    </source>
</evidence>
<reference key="1">
    <citation type="journal article" date="2008" name="J. Biotechnol.">
        <title>The genome of Xanthomonas campestris pv. campestris B100 and its use for the reconstruction of metabolic pathways involved in xanthan biosynthesis.</title>
        <authorList>
            <person name="Vorhoelter F.-J."/>
            <person name="Schneiker S."/>
            <person name="Goesmann A."/>
            <person name="Krause L."/>
            <person name="Bekel T."/>
            <person name="Kaiser O."/>
            <person name="Linke B."/>
            <person name="Patschkowski T."/>
            <person name="Rueckert C."/>
            <person name="Schmid J."/>
            <person name="Sidhu V.K."/>
            <person name="Sieber V."/>
            <person name="Tauch A."/>
            <person name="Watt S.A."/>
            <person name="Weisshaar B."/>
            <person name="Becker A."/>
            <person name="Niehaus K."/>
            <person name="Puehler A."/>
        </authorList>
    </citation>
    <scope>NUCLEOTIDE SEQUENCE [LARGE SCALE GENOMIC DNA]</scope>
    <source>
        <strain>B100</strain>
    </source>
</reference>
<feature type="chain" id="PRO_1000136634" description="Phosphoglycerol transferase I">
    <location>
        <begin position="1"/>
        <end position="702"/>
    </location>
</feature>
<feature type="transmembrane region" description="Helical" evidence="1">
    <location>
        <begin position="2"/>
        <end position="22"/>
    </location>
</feature>
<feature type="transmembrane region" description="Helical" evidence="1">
    <location>
        <begin position="71"/>
        <end position="91"/>
    </location>
</feature>
<feature type="transmembrane region" description="Helical" evidence="1">
    <location>
        <begin position="103"/>
        <end position="123"/>
    </location>
</feature>
<proteinExistence type="inferred from homology"/>
<accession>B0RMT0</accession>